<comment type="function">
    <text evidence="1">Catalyzes the conversion of glucosamine-6-phosphate to glucosamine-1-phosphate.</text>
</comment>
<comment type="catalytic activity">
    <reaction evidence="1">
        <text>alpha-D-glucosamine 1-phosphate = D-glucosamine 6-phosphate</text>
        <dbReference type="Rhea" id="RHEA:23424"/>
        <dbReference type="ChEBI" id="CHEBI:58516"/>
        <dbReference type="ChEBI" id="CHEBI:58725"/>
        <dbReference type="EC" id="5.4.2.10"/>
    </reaction>
</comment>
<comment type="cofactor">
    <cofactor evidence="1">
        <name>Mg(2+)</name>
        <dbReference type="ChEBI" id="CHEBI:18420"/>
    </cofactor>
    <text evidence="1">Binds 1 Mg(2+) ion per subunit.</text>
</comment>
<comment type="PTM">
    <text evidence="1">Activated by phosphorylation.</text>
</comment>
<comment type="similarity">
    <text evidence="1">Belongs to the phosphohexose mutase family.</text>
</comment>
<sequence length="451" mass="48902">MKLKYFGTDGVRGVANQDLSPELAFRVGRAGGYVLTRHSERKQPQVLVARDTRISGEMLENALIAGLLSVGIEVLRLGVVTTPGVAYLVRAQEADAGVMITASHNPIKYNGIKYFGGNGFKLSDELEYEIEQLLDAEEDTLPRPSDAGLGTVADYHEGALKYTSFLEQTVSSDLEGLKVVVDAANGATSGFISNLFADMNVDFIPINDQPDGLNTNLNCGSTHPESLQKAVVENNADLGVAFDGDGDRCIAVDNEGNIVDGDKIMYICGKYMDKKGLLKKDTVVTTVMSNLGMYKALEAHNLKSVKTKVGDRYVVEEMLKNGYNLGGEQSGHIIFLDHNTTGDGMLTALQLLSVVKDSGKTLAELANDVTTYPQELLNIKVADKTTAMENQKLKEIIAQVEKEMNGDGRVLVRPSGTEPLLRIMAEAATPELVHEYVERIGDVARAELEVE</sequence>
<organism>
    <name type="scientific">Limosilactobacillus reuteri subsp. reuteri (strain JCM 1112)</name>
    <name type="common">Lactobacillus reuteri</name>
    <dbReference type="NCBI Taxonomy" id="557433"/>
    <lineage>
        <taxon>Bacteria</taxon>
        <taxon>Bacillati</taxon>
        <taxon>Bacillota</taxon>
        <taxon>Bacilli</taxon>
        <taxon>Lactobacillales</taxon>
        <taxon>Lactobacillaceae</taxon>
        <taxon>Limosilactobacillus</taxon>
    </lineage>
</organism>
<evidence type="ECO:0000255" key="1">
    <source>
        <dbReference type="HAMAP-Rule" id="MF_01554"/>
    </source>
</evidence>
<feature type="chain" id="PRO_1000201114" description="Phosphoglucosamine mutase">
    <location>
        <begin position="1"/>
        <end position="451"/>
    </location>
</feature>
<feature type="active site" description="Phosphoserine intermediate" evidence="1">
    <location>
        <position position="103"/>
    </location>
</feature>
<feature type="binding site" description="via phosphate group" evidence="1">
    <location>
        <position position="103"/>
    </location>
    <ligand>
        <name>Mg(2+)</name>
        <dbReference type="ChEBI" id="CHEBI:18420"/>
    </ligand>
</feature>
<feature type="binding site" evidence="1">
    <location>
        <position position="243"/>
    </location>
    <ligand>
        <name>Mg(2+)</name>
        <dbReference type="ChEBI" id="CHEBI:18420"/>
    </ligand>
</feature>
<feature type="binding site" evidence="1">
    <location>
        <position position="245"/>
    </location>
    <ligand>
        <name>Mg(2+)</name>
        <dbReference type="ChEBI" id="CHEBI:18420"/>
    </ligand>
</feature>
<feature type="binding site" evidence="1">
    <location>
        <position position="247"/>
    </location>
    <ligand>
        <name>Mg(2+)</name>
        <dbReference type="ChEBI" id="CHEBI:18420"/>
    </ligand>
</feature>
<feature type="modified residue" description="Phosphoserine" evidence="1">
    <location>
        <position position="103"/>
    </location>
</feature>
<keyword id="KW-0413">Isomerase</keyword>
<keyword id="KW-0460">Magnesium</keyword>
<keyword id="KW-0479">Metal-binding</keyword>
<keyword id="KW-0597">Phosphoprotein</keyword>
<proteinExistence type="inferred from homology"/>
<accession>B2G638</accession>
<gene>
    <name evidence="1" type="primary">glmM</name>
    <name type="ordered locus">LAR_0404</name>
</gene>
<reference key="1">
    <citation type="journal article" date="2008" name="DNA Res.">
        <title>Comparative genome analysis of Lactobacillus reuteri and Lactobacillus fermentum reveal a genomic island for reuterin and cobalamin production.</title>
        <authorList>
            <person name="Morita H."/>
            <person name="Toh H."/>
            <person name="Fukuda S."/>
            <person name="Horikawa H."/>
            <person name="Oshima K."/>
            <person name="Suzuki T."/>
            <person name="Murakami M."/>
            <person name="Hisamatsu S."/>
            <person name="Kato Y."/>
            <person name="Takizawa T."/>
            <person name="Fukuoka H."/>
            <person name="Yoshimura T."/>
            <person name="Itoh K."/>
            <person name="O'Sullivan D.J."/>
            <person name="McKay L.L."/>
            <person name="Ohno H."/>
            <person name="Kikuchi J."/>
            <person name="Masaoka T."/>
            <person name="Hattori M."/>
        </authorList>
    </citation>
    <scope>NUCLEOTIDE SEQUENCE [LARGE SCALE GENOMIC DNA]</scope>
    <source>
        <strain>JCM 1112</strain>
    </source>
</reference>
<dbReference type="EC" id="5.4.2.10" evidence="1"/>
<dbReference type="EMBL" id="AP007281">
    <property type="protein sequence ID" value="BAG24920.1"/>
    <property type="molecule type" value="Genomic_DNA"/>
</dbReference>
<dbReference type="RefSeq" id="WP_003667497.1">
    <property type="nucleotide sequence ID" value="NC_010609.1"/>
</dbReference>
<dbReference type="SMR" id="B2G638"/>
<dbReference type="KEGG" id="lrf:LAR_0404"/>
<dbReference type="HOGENOM" id="CLU_016950_7_0_9"/>
<dbReference type="GO" id="GO:0005829">
    <property type="term" value="C:cytosol"/>
    <property type="evidence" value="ECO:0007669"/>
    <property type="project" value="TreeGrafter"/>
</dbReference>
<dbReference type="GO" id="GO:0000287">
    <property type="term" value="F:magnesium ion binding"/>
    <property type="evidence" value="ECO:0007669"/>
    <property type="project" value="UniProtKB-UniRule"/>
</dbReference>
<dbReference type="GO" id="GO:0008966">
    <property type="term" value="F:phosphoglucosamine mutase activity"/>
    <property type="evidence" value="ECO:0007669"/>
    <property type="project" value="UniProtKB-UniRule"/>
</dbReference>
<dbReference type="GO" id="GO:0004615">
    <property type="term" value="F:phosphomannomutase activity"/>
    <property type="evidence" value="ECO:0007669"/>
    <property type="project" value="TreeGrafter"/>
</dbReference>
<dbReference type="GO" id="GO:0005975">
    <property type="term" value="P:carbohydrate metabolic process"/>
    <property type="evidence" value="ECO:0007669"/>
    <property type="project" value="InterPro"/>
</dbReference>
<dbReference type="GO" id="GO:0009252">
    <property type="term" value="P:peptidoglycan biosynthetic process"/>
    <property type="evidence" value="ECO:0007669"/>
    <property type="project" value="TreeGrafter"/>
</dbReference>
<dbReference type="GO" id="GO:0006048">
    <property type="term" value="P:UDP-N-acetylglucosamine biosynthetic process"/>
    <property type="evidence" value="ECO:0007669"/>
    <property type="project" value="TreeGrafter"/>
</dbReference>
<dbReference type="CDD" id="cd05802">
    <property type="entry name" value="GlmM"/>
    <property type="match status" value="1"/>
</dbReference>
<dbReference type="FunFam" id="3.30.310.50:FF:000001">
    <property type="entry name" value="Phosphoglucosamine mutase"/>
    <property type="match status" value="1"/>
</dbReference>
<dbReference type="FunFam" id="3.40.120.10:FF:000001">
    <property type="entry name" value="Phosphoglucosamine mutase"/>
    <property type="match status" value="1"/>
</dbReference>
<dbReference type="FunFam" id="3.40.120.10:FF:000002">
    <property type="entry name" value="Phosphoglucosamine mutase"/>
    <property type="match status" value="1"/>
</dbReference>
<dbReference type="Gene3D" id="3.40.120.10">
    <property type="entry name" value="Alpha-D-Glucose-1,6-Bisphosphate, subunit A, domain 3"/>
    <property type="match status" value="3"/>
</dbReference>
<dbReference type="Gene3D" id="3.30.310.50">
    <property type="entry name" value="Alpha-D-phosphohexomutase, C-terminal domain"/>
    <property type="match status" value="1"/>
</dbReference>
<dbReference type="HAMAP" id="MF_01554_B">
    <property type="entry name" value="GlmM_B"/>
    <property type="match status" value="1"/>
</dbReference>
<dbReference type="InterPro" id="IPR005844">
    <property type="entry name" value="A-D-PHexomutase_a/b/a-I"/>
</dbReference>
<dbReference type="InterPro" id="IPR016055">
    <property type="entry name" value="A-D-PHexomutase_a/b/a-I/II/III"/>
</dbReference>
<dbReference type="InterPro" id="IPR005845">
    <property type="entry name" value="A-D-PHexomutase_a/b/a-II"/>
</dbReference>
<dbReference type="InterPro" id="IPR005846">
    <property type="entry name" value="A-D-PHexomutase_a/b/a-III"/>
</dbReference>
<dbReference type="InterPro" id="IPR005843">
    <property type="entry name" value="A-D-PHexomutase_C"/>
</dbReference>
<dbReference type="InterPro" id="IPR036900">
    <property type="entry name" value="A-D-PHexomutase_C_sf"/>
</dbReference>
<dbReference type="InterPro" id="IPR016066">
    <property type="entry name" value="A-D-PHexomutase_CS"/>
</dbReference>
<dbReference type="InterPro" id="IPR005841">
    <property type="entry name" value="Alpha-D-phosphohexomutase_SF"/>
</dbReference>
<dbReference type="InterPro" id="IPR006352">
    <property type="entry name" value="GlmM_bact"/>
</dbReference>
<dbReference type="InterPro" id="IPR050060">
    <property type="entry name" value="Phosphoglucosamine_mutase"/>
</dbReference>
<dbReference type="NCBIfam" id="TIGR01455">
    <property type="entry name" value="glmM"/>
    <property type="match status" value="1"/>
</dbReference>
<dbReference type="NCBIfam" id="NF008139">
    <property type="entry name" value="PRK10887.1"/>
    <property type="match status" value="1"/>
</dbReference>
<dbReference type="PANTHER" id="PTHR42946:SF1">
    <property type="entry name" value="PHOSPHOGLUCOMUTASE (ALPHA-D-GLUCOSE-1,6-BISPHOSPHATE-DEPENDENT)"/>
    <property type="match status" value="1"/>
</dbReference>
<dbReference type="PANTHER" id="PTHR42946">
    <property type="entry name" value="PHOSPHOHEXOSE MUTASE"/>
    <property type="match status" value="1"/>
</dbReference>
<dbReference type="Pfam" id="PF02878">
    <property type="entry name" value="PGM_PMM_I"/>
    <property type="match status" value="1"/>
</dbReference>
<dbReference type="Pfam" id="PF02879">
    <property type="entry name" value="PGM_PMM_II"/>
    <property type="match status" value="1"/>
</dbReference>
<dbReference type="Pfam" id="PF02880">
    <property type="entry name" value="PGM_PMM_III"/>
    <property type="match status" value="1"/>
</dbReference>
<dbReference type="Pfam" id="PF00408">
    <property type="entry name" value="PGM_PMM_IV"/>
    <property type="match status" value="1"/>
</dbReference>
<dbReference type="PRINTS" id="PR00509">
    <property type="entry name" value="PGMPMM"/>
</dbReference>
<dbReference type="SUPFAM" id="SSF55957">
    <property type="entry name" value="Phosphoglucomutase, C-terminal domain"/>
    <property type="match status" value="1"/>
</dbReference>
<dbReference type="SUPFAM" id="SSF53738">
    <property type="entry name" value="Phosphoglucomutase, first 3 domains"/>
    <property type="match status" value="3"/>
</dbReference>
<dbReference type="PROSITE" id="PS00710">
    <property type="entry name" value="PGM_PMM"/>
    <property type="match status" value="1"/>
</dbReference>
<protein>
    <recommendedName>
        <fullName evidence="1">Phosphoglucosamine mutase</fullName>
        <ecNumber evidence="1">5.4.2.10</ecNumber>
    </recommendedName>
</protein>
<name>GLMM_LIMRJ</name>